<proteinExistence type="inferred from homology"/>
<accession>B3QEW0</accession>
<name>Y3968_RHOPT</name>
<reference key="1">
    <citation type="submission" date="2008-05" db="EMBL/GenBank/DDBJ databases">
        <title>Complete sequence of Rhodopseudomonas palustris TIE-1.</title>
        <authorList>
            <consortium name="US DOE Joint Genome Institute"/>
            <person name="Lucas S."/>
            <person name="Copeland A."/>
            <person name="Lapidus A."/>
            <person name="Glavina del Rio T."/>
            <person name="Dalin E."/>
            <person name="Tice H."/>
            <person name="Pitluck S."/>
            <person name="Chain P."/>
            <person name="Malfatti S."/>
            <person name="Shin M."/>
            <person name="Vergez L."/>
            <person name="Lang D."/>
            <person name="Schmutz J."/>
            <person name="Larimer F."/>
            <person name="Land M."/>
            <person name="Hauser L."/>
            <person name="Kyrpides N."/>
            <person name="Mikhailova N."/>
            <person name="Emerson D."/>
            <person name="Newman D.K."/>
            <person name="Roden E."/>
            <person name="Richardson P."/>
        </authorList>
    </citation>
    <scope>NUCLEOTIDE SEQUENCE [LARGE SCALE GENOMIC DNA]</scope>
    <source>
        <strain>TIE-1</strain>
    </source>
</reference>
<dbReference type="EC" id="1.14.11.-" evidence="1"/>
<dbReference type="EMBL" id="CP001096">
    <property type="protein sequence ID" value="ACF02464.1"/>
    <property type="molecule type" value="Genomic_DNA"/>
</dbReference>
<dbReference type="RefSeq" id="WP_012496894.1">
    <property type="nucleotide sequence ID" value="NC_011004.1"/>
</dbReference>
<dbReference type="SMR" id="B3QEW0"/>
<dbReference type="KEGG" id="rpt:Rpal_3968"/>
<dbReference type="HOGENOM" id="CLU_106663_0_0_5"/>
<dbReference type="OrthoDB" id="9812472at2"/>
<dbReference type="Proteomes" id="UP000001725">
    <property type="component" value="Chromosome"/>
</dbReference>
<dbReference type="GO" id="GO:0016706">
    <property type="term" value="F:2-oxoglutarate-dependent dioxygenase activity"/>
    <property type="evidence" value="ECO:0007669"/>
    <property type="project" value="UniProtKB-UniRule"/>
</dbReference>
<dbReference type="GO" id="GO:0005506">
    <property type="term" value="F:iron ion binding"/>
    <property type="evidence" value="ECO:0007669"/>
    <property type="project" value="UniProtKB-UniRule"/>
</dbReference>
<dbReference type="GO" id="GO:0031418">
    <property type="term" value="F:L-ascorbic acid binding"/>
    <property type="evidence" value="ECO:0007669"/>
    <property type="project" value="UniProtKB-KW"/>
</dbReference>
<dbReference type="GO" id="GO:0006974">
    <property type="term" value="P:DNA damage response"/>
    <property type="evidence" value="ECO:0007669"/>
    <property type="project" value="TreeGrafter"/>
</dbReference>
<dbReference type="GO" id="GO:0006879">
    <property type="term" value="P:intracellular iron ion homeostasis"/>
    <property type="evidence" value="ECO:0007669"/>
    <property type="project" value="TreeGrafter"/>
</dbReference>
<dbReference type="Gene3D" id="2.60.120.620">
    <property type="entry name" value="q2cbj1_9rhob like domain"/>
    <property type="match status" value="1"/>
</dbReference>
<dbReference type="Gene3D" id="4.10.860.20">
    <property type="entry name" value="Rabenosyn, Rab binding domain"/>
    <property type="match status" value="1"/>
</dbReference>
<dbReference type="HAMAP" id="MF_00657">
    <property type="entry name" value="Hydroxyl_YbiX"/>
    <property type="match status" value="1"/>
</dbReference>
<dbReference type="InterPro" id="IPR005123">
    <property type="entry name" value="Oxoglu/Fe-dep_dioxygenase_dom"/>
</dbReference>
<dbReference type="InterPro" id="IPR041097">
    <property type="entry name" value="PKHD_C"/>
</dbReference>
<dbReference type="InterPro" id="IPR023550">
    <property type="entry name" value="PKHD_hydroxylase"/>
</dbReference>
<dbReference type="InterPro" id="IPR006620">
    <property type="entry name" value="Pro_4_hyd_alph"/>
</dbReference>
<dbReference type="InterPro" id="IPR044862">
    <property type="entry name" value="Pro_4_hyd_alph_FE2OG_OXY"/>
</dbReference>
<dbReference type="NCBIfam" id="NF003973">
    <property type="entry name" value="PRK05467.1-2"/>
    <property type="match status" value="1"/>
</dbReference>
<dbReference type="NCBIfam" id="NF003974">
    <property type="entry name" value="PRK05467.1-3"/>
    <property type="match status" value="1"/>
</dbReference>
<dbReference type="NCBIfam" id="NF003975">
    <property type="entry name" value="PRK05467.1-4"/>
    <property type="match status" value="1"/>
</dbReference>
<dbReference type="PANTHER" id="PTHR41536">
    <property type="entry name" value="PKHD-TYPE HYDROXYLASE YBIX"/>
    <property type="match status" value="1"/>
</dbReference>
<dbReference type="PANTHER" id="PTHR41536:SF1">
    <property type="entry name" value="PKHD-TYPE HYDROXYLASE YBIX"/>
    <property type="match status" value="1"/>
</dbReference>
<dbReference type="Pfam" id="PF13640">
    <property type="entry name" value="2OG-FeII_Oxy_3"/>
    <property type="match status" value="1"/>
</dbReference>
<dbReference type="Pfam" id="PF18331">
    <property type="entry name" value="PKHD_C"/>
    <property type="match status" value="1"/>
</dbReference>
<dbReference type="SMART" id="SM00702">
    <property type="entry name" value="P4Hc"/>
    <property type="match status" value="1"/>
</dbReference>
<dbReference type="SUPFAM" id="SSF51197">
    <property type="entry name" value="Clavaminate synthase-like"/>
    <property type="match status" value="1"/>
</dbReference>
<dbReference type="PROSITE" id="PS51471">
    <property type="entry name" value="FE2OG_OXY"/>
    <property type="match status" value="1"/>
</dbReference>
<organism>
    <name type="scientific">Rhodopseudomonas palustris (strain TIE-1)</name>
    <dbReference type="NCBI Taxonomy" id="395960"/>
    <lineage>
        <taxon>Bacteria</taxon>
        <taxon>Pseudomonadati</taxon>
        <taxon>Pseudomonadota</taxon>
        <taxon>Alphaproteobacteria</taxon>
        <taxon>Hyphomicrobiales</taxon>
        <taxon>Nitrobacteraceae</taxon>
        <taxon>Rhodopseudomonas</taxon>
    </lineage>
</organism>
<gene>
    <name type="ordered locus">Rpal_3968</name>
</gene>
<evidence type="ECO:0000255" key="1">
    <source>
        <dbReference type="HAMAP-Rule" id="MF_00657"/>
    </source>
</evidence>
<sequence length="229" mass="25348">MLVCIPEVLPKSEVAEFRRLMDAADWEDGRSTAGAQSAMVKRNEQLPPDSDLARTLGRRIVSALTGNPKFVSAAVPLQIFPPLFNRYAASGGHHFGIHVDNAVRGDHLTGLRIRTDLSVTLFLAEPDEYDGGELVIEDTYGSHEVKLAAGDAVLYPSTSLHMVTPVTRGARVASFFWLQSMIRDAQARSMIYDLDNAIQALVERLGRDDPETVKLTGIYHNLIRYWAEV</sequence>
<feature type="chain" id="PRO_1000131219" description="PKHD-type hydroxylase Rpal_3968">
    <location>
        <begin position="1"/>
        <end position="229"/>
    </location>
</feature>
<feature type="domain" description="Fe2OG dioxygenase" evidence="1">
    <location>
        <begin position="78"/>
        <end position="180"/>
    </location>
</feature>
<feature type="binding site" evidence="1">
    <location>
        <position position="98"/>
    </location>
    <ligand>
        <name>Fe cation</name>
        <dbReference type="ChEBI" id="CHEBI:24875"/>
    </ligand>
</feature>
<feature type="binding site" evidence="1">
    <location>
        <position position="100"/>
    </location>
    <ligand>
        <name>Fe cation</name>
        <dbReference type="ChEBI" id="CHEBI:24875"/>
    </ligand>
</feature>
<feature type="binding site" evidence="1">
    <location>
        <position position="161"/>
    </location>
    <ligand>
        <name>Fe cation</name>
        <dbReference type="ChEBI" id="CHEBI:24875"/>
    </ligand>
</feature>
<feature type="binding site" evidence="1">
    <location>
        <position position="171"/>
    </location>
    <ligand>
        <name>2-oxoglutarate</name>
        <dbReference type="ChEBI" id="CHEBI:16810"/>
    </ligand>
</feature>
<comment type="cofactor">
    <cofactor evidence="1">
        <name>Fe(2+)</name>
        <dbReference type="ChEBI" id="CHEBI:29033"/>
    </cofactor>
    <text evidence="1">Binds 1 Fe(2+) ion per subunit.</text>
</comment>
<comment type="cofactor">
    <cofactor evidence="1">
        <name>L-ascorbate</name>
        <dbReference type="ChEBI" id="CHEBI:38290"/>
    </cofactor>
</comment>
<keyword id="KW-0223">Dioxygenase</keyword>
<keyword id="KW-0408">Iron</keyword>
<keyword id="KW-0479">Metal-binding</keyword>
<keyword id="KW-0560">Oxidoreductase</keyword>
<keyword id="KW-0847">Vitamin C</keyword>
<protein>
    <recommendedName>
        <fullName evidence="1">PKHD-type hydroxylase Rpal_3968</fullName>
        <ecNumber evidence="1">1.14.11.-</ecNumber>
    </recommendedName>
</protein>